<organism>
    <name type="scientific">Shewanella sediminis (strain HAW-EB3)</name>
    <dbReference type="NCBI Taxonomy" id="425104"/>
    <lineage>
        <taxon>Bacteria</taxon>
        <taxon>Pseudomonadati</taxon>
        <taxon>Pseudomonadota</taxon>
        <taxon>Gammaproteobacteria</taxon>
        <taxon>Alteromonadales</taxon>
        <taxon>Shewanellaceae</taxon>
        <taxon>Shewanella</taxon>
    </lineage>
</organism>
<comment type="function">
    <text evidence="1">An aminoacyl-tRNA editing enzyme that deacylates mischarged D-aminoacyl-tRNAs. Also deacylates mischarged glycyl-tRNA(Ala), protecting cells against glycine mischarging by AlaRS. Acts via tRNA-based rather than protein-based catalysis; rejects L-amino acids rather than detecting D-amino acids in the active site. By recycling D-aminoacyl-tRNA to D-amino acids and free tRNA molecules, this enzyme counteracts the toxicity associated with the formation of D-aminoacyl-tRNA entities in vivo and helps enforce protein L-homochirality.</text>
</comment>
<comment type="catalytic activity">
    <reaction evidence="1">
        <text>glycyl-tRNA(Ala) + H2O = tRNA(Ala) + glycine + H(+)</text>
        <dbReference type="Rhea" id="RHEA:53744"/>
        <dbReference type="Rhea" id="RHEA-COMP:9657"/>
        <dbReference type="Rhea" id="RHEA-COMP:13640"/>
        <dbReference type="ChEBI" id="CHEBI:15377"/>
        <dbReference type="ChEBI" id="CHEBI:15378"/>
        <dbReference type="ChEBI" id="CHEBI:57305"/>
        <dbReference type="ChEBI" id="CHEBI:78442"/>
        <dbReference type="ChEBI" id="CHEBI:78522"/>
        <dbReference type="EC" id="3.1.1.96"/>
    </reaction>
</comment>
<comment type="catalytic activity">
    <reaction evidence="1">
        <text>a D-aminoacyl-tRNA + H2O = a tRNA + a D-alpha-amino acid + H(+)</text>
        <dbReference type="Rhea" id="RHEA:13953"/>
        <dbReference type="Rhea" id="RHEA-COMP:10123"/>
        <dbReference type="Rhea" id="RHEA-COMP:10124"/>
        <dbReference type="ChEBI" id="CHEBI:15377"/>
        <dbReference type="ChEBI" id="CHEBI:15378"/>
        <dbReference type="ChEBI" id="CHEBI:59871"/>
        <dbReference type="ChEBI" id="CHEBI:78442"/>
        <dbReference type="ChEBI" id="CHEBI:79333"/>
        <dbReference type="EC" id="3.1.1.96"/>
    </reaction>
</comment>
<comment type="subunit">
    <text evidence="1">Homodimer.</text>
</comment>
<comment type="subcellular location">
    <subcellularLocation>
        <location evidence="1">Cytoplasm</location>
    </subcellularLocation>
</comment>
<comment type="domain">
    <text evidence="1">A Gly-cisPro motif from one monomer fits into the active site of the other monomer to allow specific chiral rejection of L-amino acids.</text>
</comment>
<comment type="similarity">
    <text evidence="1">Belongs to the DTD family.</text>
</comment>
<protein>
    <recommendedName>
        <fullName evidence="1">D-aminoacyl-tRNA deacylase</fullName>
        <shortName evidence="1">DTD</shortName>
        <ecNumber evidence="1">3.1.1.96</ecNumber>
    </recommendedName>
    <alternativeName>
        <fullName evidence="1">Gly-tRNA(Ala) deacylase</fullName>
    </alternativeName>
</protein>
<evidence type="ECO:0000255" key="1">
    <source>
        <dbReference type="HAMAP-Rule" id="MF_00518"/>
    </source>
</evidence>
<keyword id="KW-0963">Cytoplasm</keyword>
<keyword id="KW-0378">Hydrolase</keyword>
<keyword id="KW-1185">Reference proteome</keyword>
<keyword id="KW-0694">RNA-binding</keyword>
<keyword id="KW-0820">tRNA-binding</keyword>
<feature type="chain" id="PRO_1000081668" description="D-aminoacyl-tRNA deacylase">
    <location>
        <begin position="1"/>
        <end position="145"/>
    </location>
</feature>
<feature type="short sequence motif" description="Gly-cisPro motif, important for rejection of L-amino acids" evidence="1">
    <location>
        <begin position="137"/>
        <end position="138"/>
    </location>
</feature>
<reference key="1">
    <citation type="submission" date="2007-08" db="EMBL/GenBank/DDBJ databases">
        <title>Complete sequence of Shewanella sediminis HAW-EB3.</title>
        <authorList>
            <consortium name="US DOE Joint Genome Institute"/>
            <person name="Copeland A."/>
            <person name="Lucas S."/>
            <person name="Lapidus A."/>
            <person name="Barry K."/>
            <person name="Glavina del Rio T."/>
            <person name="Dalin E."/>
            <person name="Tice H."/>
            <person name="Pitluck S."/>
            <person name="Chertkov O."/>
            <person name="Brettin T."/>
            <person name="Bruce D."/>
            <person name="Detter J.C."/>
            <person name="Han C."/>
            <person name="Schmutz J."/>
            <person name="Larimer F."/>
            <person name="Land M."/>
            <person name="Hauser L."/>
            <person name="Kyrpides N."/>
            <person name="Kim E."/>
            <person name="Zhao J.-S."/>
            <person name="Richardson P."/>
        </authorList>
    </citation>
    <scope>NUCLEOTIDE SEQUENCE [LARGE SCALE GENOMIC DNA]</scope>
    <source>
        <strain>HAW-EB3</strain>
    </source>
</reference>
<sequence length="145" mass="15578">MIALIQRVTQAKVDVDGKTIGAIDKGLLVLLGVEREDDSFKMEKLANKVMSYRVFSDENGKMNLNVSQAGGALLVVSQFTLAADTGRGLRPSFSGAGTPDQAKVLYEEFVAFCRAKGMPTQTGEFAADMQVSLVNDGPVTFNLQV</sequence>
<name>DTD_SHESH</name>
<gene>
    <name evidence="1" type="primary">dtd</name>
    <name type="ordered locus">Ssed_0305</name>
</gene>
<dbReference type="EC" id="3.1.1.96" evidence="1"/>
<dbReference type="EMBL" id="CP000821">
    <property type="protein sequence ID" value="ABV34918.1"/>
    <property type="molecule type" value="Genomic_DNA"/>
</dbReference>
<dbReference type="RefSeq" id="WP_012004444.1">
    <property type="nucleotide sequence ID" value="NC_009831.1"/>
</dbReference>
<dbReference type="SMR" id="A8FPZ5"/>
<dbReference type="STRING" id="425104.Ssed_0305"/>
<dbReference type="KEGG" id="sse:Ssed_0305"/>
<dbReference type="eggNOG" id="COG1490">
    <property type="taxonomic scope" value="Bacteria"/>
</dbReference>
<dbReference type="HOGENOM" id="CLU_076901_1_1_6"/>
<dbReference type="OrthoDB" id="9801395at2"/>
<dbReference type="Proteomes" id="UP000002015">
    <property type="component" value="Chromosome"/>
</dbReference>
<dbReference type="GO" id="GO:0005737">
    <property type="term" value="C:cytoplasm"/>
    <property type="evidence" value="ECO:0007669"/>
    <property type="project" value="UniProtKB-SubCell"/>
</dbReference>
<dbReference type="GO" id="GO:0051500">
    <property type="term" value="F:D-tyrosyl-tRNA(Tyr) deacylase activity"/>
    <property type="evidence" value="ECO:0007669"/>
    <property type="project" value="TreeGrafter"/>
</dbReference>
<dbReference type="GO" id="GO:0106026">
    <property type="term" value="F:Gly-tRNA(Ala) deacylase activity"/>
    <property type="evidence" value="ECO:0007669"/>
    <property type="project" value="UniProtKB-UniRule"/>
</dbReference>
<dbReference type="GO" id="GO:0043908">
    <property type="term" value="F:Ser(Gly)-tRNA(Ala) hydrolase activity"/>
    <property type="evidence" value="ECO:0007669"/>
    <property type="project" value="UniProtKB-UniRule"/>
</dbReference>
<dbReference type="GO" id="GO:0000049">
    <property type="term" value="F:tRNA binding"/>
    <property type="evidence" value="ECO:0007669"/>
    <property type="project" value="UniProtKB-UniRule"/>
</dbReference>
<dbReference type="GO" id="GO:0019478">
    <property type="term" value="P:D-amino acid catabolic process"/>
    <property type="evidence" value="ECO:0007669"/>
    <property type="project" value="UniProtKB-UniRule"/>
</dbReference>
<dbReference type="CDD" id="cd00563">
    <property type="entry name" value="Dtyr_deacylase"/>
    <property type="match status" value="1"/>
</dbReference>
<dbReference type="FunFam" id="3.50.80.10:FF:000001">
    <property type="entry name" value="D-aminoacyl-tRNA deacylase"/>
    <property type="match status" value="1"/>
</dbReference>
<dbReference type="Gene3D" id="3.50.80.10">
    <property type="entry name" value="D-tyrosyl-tRNA(Tyr) deacylase"/>
    <property type="match status" value="1"/>
</dbReference>
<dbReference type="HAMAP" id="MF_00518">
    <property type="entry name" value="Deacylase_Dtd"/>
    <property type="match status" value="1"/>
</dbReference>
<dbReference type="InterPro" id="IPR003732">
    <property type="entry name" value="Daa-tRNA_deacyls_DTD"/>
</dbReference>
<dbReference type="InterPro" id="IPR023509">
    <property type="entry name" value="DTD-like_sf"/>
</dbReference>
<dbReference type="NCBIfam" id="TIGR00256">
    <property type="entry name" value="D-aminoacyl-tRNA deacylase"/>
    <property type="match status" value="1"/>
</dbReference>
<dbReference type="PANTHER" id="PTHR10472:SF5">
    <property type="entry name" value="D-AMINOACYL-TRNA DEACYLASE 1"/>
    <property type="match status" value="1"/>
</dbReference>
<dbReference type="PANTHER" id="PTHR10472">
    <property type="entry name" value="D-TYROSYL-TRNA TYR DEACYLASE"/>
    <property type="match status" value="1"/>
</dbReference>
<dbReference type="Pfam" id="PF02580">
    <property type="entry name" value="Tyr_Deacylase"/>
    <property type="match status" value="1"/>
</dbReference>
<dbReference type="SUPFAM" id="SSF69500">
    <property type="entry name" value="DTD-like"/>
    <property type="match status" value="1"/>
</dbReference>
<proteinExistence type="inferred from homology"/>
<accession>A8FPZ5</accession>